<keyword id="KW-0025">Alternative splicing</keyword>
<keyword id="KW-0963">Cytoplasm</keyword>
<keyword id="KW-0325">Glycoprotein</keyword>
<keyword id="KW-0333">Golgi apparatus</keyword>
<keyword id="KW-0472">Membrane</keyword>
<keyword id="KW-0539">Nucleus</keyword>
<keyword id="KW-0597">Phosphoprotein</keyword>
<keyword id="KW-1185">Reference proteome</keyword>
<keyword id="KW-0812">Transmembrane</keyword>
<keyword id="KW-1133">Transmembrane helix</keyword>
<feature type="chain" id="PRO_0000331633" description="Transmembrane protein 209">
    <location>
        <begin position="1"/>
        <end position="561"/>
    </location>
</feature>
<feature type="transmembrane region" description="Helical" evidence="2">
    <location>
        <begin position="28"/>
        <end position="48"/>
    </location>
</feature>
<feature type="transmembrane region" description="Helical" evidence="2">
    <location>
        <begin position="60"/>
        <end position="80"/>
    </location>
</feature>
<feature type="region of interest" description="Disordered" evidence="3">
    <location>
        <begin position="120"/>
        <end position="156"/>
    </location>
</feature>
<feature type="region of interest" description="Disordered" evidence="3">
    <location>
        <begin position="200"/>
        <end position="232"/>
    </location>
</feature>
<feature type="region of interest" description="Disordered" evidence="3">
    <location>
        <begin position="250"/>
        <end position="270"/>
    </location>
</feature>
<feature type="compositionally biased region" description="Low complexity" evidence="3">
    <location>
        <begin position="138"/>
        <end position="152"/>
    </location>
</feature>
<feature type="compositionally biased region" description="Low complexity" evidence="3">
    <location>
        <begin position="260"/>
        <end position="270"/>
    </location>
</feature>
<feature type="modified residue" description="Phosphoserine" evidence="1">
    <location>
        <position position="11"/>
    </location>
</feature>
<feature type="modified residue" description="Phosphoserine" evidence="1">
    <location>
        <position position="98"/>
    </location>
</feature>
<feature type="modified residue" description="Phosphoserine" evidence="1">
    <location>
        <position position="201"/>
    </location>
</feature>
<feature type="modified residue" description="Phosphoserine" evidence="1">
    <location>
        <position position="248"/>
    </location>
</feature>
<feature type="modified residue" description="Phosphoserine" evidence="1">
    <location>
        <position position="278"/>
    </location>
</feature>
<feature type="glycosylation site" description="N-linked (GlcNAc...) asparagine" evidence="2">
    <location>
        <position position="57"/>
    </location>
</feature>
<feature type="glycosylation site" description="N-linked (GlcNAc...) asparagine" evidence="2">
    <location>
        <position position="274"/>
    </location>
</feature>
<feature type="splice variant" id="VSP_033284" description="In isoform 2." evidence="4">
    <location>
        <position position="1"/>
    </location>
</feature>
<feature type="splice variant" id="VSP_033285" description="In isoform 3." evidence="5">
    <location>
        <begin position="342"/>
        <end position="448"/>
    </location>
</feature>
<feature type="splice variant" id="VSP_033286" description="In isoform 3." evidence="5">
    <original>RVNLGLSGVNILWIFGE</original>
    <variation>N</variation>
    <location>
        <begin position="545"/>
        <end position="561"/>
    </location>
</feature>
<feature type="sequence conflict" description="In Ref. 1; BAC37329." evidence="6" ref="1">
    <original>M</original>
    <variation>I</variation>
    <location>
        <position position="39"/>
    </location>
</feature>
<feature type="sequence conflict" description="In Ref. 1; BAC37329." evidence="6" ref="1">
    <original>L</original>
    <variation>V</variation>
    <location>
        <position position="68"/>
    </location>
</feature>
<feature type="sequence conflict" description="In Ref. 1; BAC37329." evidence="6" ref="1">
    <original>Q</original>
    <variation>R</variation>
    <location>
        <position position="407"/>
    </location>
</feature>
<dbReference type="EMBL" id="AK029366">
    <property type="protein sequence ID" value="BAC26420.1"/>
    <property type="molecule type" value="mRNA"/>
</dbReference>
<dbReference type="EMBL" id="AK044877">
    <property type="protein sequence ID" value="BAC32126.1"/>
    <property type="molecule type" value="mRNA"/>
</dbReference>
<dbReference type="EMBL" id="AK078544">
    <property type="protein sequence ID" value="BAC37329.1"/>
    <property type="molecule type" value="mRNA"/>
</dbReference>
<dbReference type="EMBL" id="AK089962">
    <property type="protein sequence ID" value="BAC41016.1"/>
    <property type="status" value="ALT_FRAME"/>
    <property type="molecule type" value="mRNA"/>
</dbReference>
<dbReference type="EMBL" id="BC057109">
    <property type="protein sequence ID" value="AAH57109.1"/>
    <property type="molecule type" value="mRNA"/>
</dbReference>
<dbReference type="EMBL" id="BC052187">
    <property type="protein sequence ID" value="AAH52187.1"/>
    <property type="molecule type" value="mRNA"/>
</dbReference>
<dbReference type="CCDS" id="CCDS19972.1">
    <molecule id="Q8BRG8-1"/>
</dbReference>
<dbReference type="CCDS" id="CCDS80511.1">
    <molecule id="Q8BRG8-2"/>
</dbReference>
<dbReference type="RefSeq" id="NP_001298022.1">
    <molecule id="Q8BRG8-2"/>
    <property type="nucleotide sequence ID" value="NM_001311093.1"/>
</dbReference>
<dbReference type="RefSeq" id="NP_848740.3">
    <molecule id="Q8BRG8-1"/>
    <property type="nucleotide sequence ID" value="NM_178625.4"/>
</dbReference>
<dbReference type="RefSeq" id="XP_006505233.2">
    <molecule id="Q8BRG8-2"/>
    <property type="nucleotide sequence ID" value="XM_006505170.5"/>
</dbReference>
<dbReference type="SMR" id="Q8BRG8"/>
<dbReference type="BioGRID" id="215490">
    <property type="interactions" value="2"/>
</dbReference>
<dbReference type="FunCoup" id="Q8BRG8">
    <property type="interactions" value="1687"/>
</dbReference>
<dbReference type="IntAct" id="Q8BRG8">
    <property type="interactions" value="2"/>
</dbReference>
<dbReference type="STRING" id="10090.ENSMUSP00000110813"/>
<dbReference type="GlyCosmos" id="Q8BRG8">
    <property type="glycosylation" value="2 sites, No reported glycans"/>
</dbReference>
<dbReference type="GlyGen" id="Q8BRG8">
    <property type="glycosylation" value="2 sites"/>
</dbReference>
<dbReference type="iPTMnet" id="Q8BRG8"/>
<dbReference type="PhosphoSitePlus" id="Q8BRG8"/>
<dbReference type="PaxDb" id="10090-ENSMUSP00000110813"/>
<dbReference type="PeptideAtlas" id="Q8BRG8"/>
<dbReference type="ProteomicsDB" id="258916">
    <molecule id="Q8BRG8-1"/>
</dbReference>
<dbReference type="ProteomicsDB" id="258917">
    <molecule id="Q8BRG8-2"/>
</dbReference>
<dbReference type="ProteomicsDB" id="258918">
    <molecule id="Q8BRG8-3"/>
</dbReference>
<dbReference type="Pumba" id="Q8BRG8"/>
<dbReference type="Antibodypedia" id="32026">
    <property type="antibodies" value="55 antibodies from 19 providers"/>
</dbReference>
<dbReference type="DNASU" id="72649"/>
<dbReference type="Ensembl" id="ENSMUST00000064330.13">
    <molecule id="Q8BRG8-3"/>
    <property type="protein sequence ID" value="ENSMUSP00000067667.7"/>
    <property type="gene ID" value="ENSMUSG00000029782.21"/>
</dbReference>
<dbReference type="Ensembl" id="ENSMUST00000115157.8">
    <molecule id="Q8BRG8-2"/>
    <property type="protein sequence ID" value="ENSMUSP00000110810.2"/>
    <property type="gene ID" value="ENSMUSG00000029782.21"/>
</dbReference>
<dbReference type="Ensembl" id="ENSMUST00000115160.10">
    <molecule id="Q8BRG8-1"/>
    <property type="protein sequence ID" value="ENSMUSP00000110813.4"/>
    <property type="gene ID" value="ENSMUSG00000029782.21"/>
</dbReference>
<dbReference type="Ensembl" id="ENSMUST00000138823.8">
    <molecule id="Q8BRG8-1"/>
    <property type="protein sequence ID" value="ENSMUSP00000138292.2"/>
    <property type="gene ID" value="ENSMUSG00000029782.21"/>
</dbReference>
<dbReference type="GeneID" id="72649"/>
<dbReference type="KEGG" id="mmu:72649"/>
<dbReference type="UCSC" id="uc009bfi.1">
    <molecule id="Q8BRG8-3"/>
    <property type="organism name" value="mouse"/>
</dbReference>
<dbReference type="UCSC" id="uc009bfj.1">
    <molecule id="Q8BRG8-1"/>
    <property type="organism name" value="mouse"/>
</dbReference>
<dbReference type="AGR" id="MGI:1919899"/>
<dbReference type="CTD" id="84928"/>
<dbReference type="MGI" id="MGI:1919899">
    <property type="gene designation" value="Tmem209"/>
</dbReference>
<dbReference type="VEuPathDB" id="HostDB:ENSMUSG00000029782"/>
<dbReference type="eggNOG" id="KOG4670">
    <property type="taxonomic scope" value="Eukaryota"/>
</dbReference>
<dbReference type="GeneTree" id="ENSGT00390000013963"/>
<dbReference type="InParanoid" id="Q8BRG8"/>
<dbReference type="OMA" id="IRGMHLG"/>
<dbReference type="OrthoDB" id="509821at2759"/>
<dbReference type="PhylomeDB" id="Q8BRG8"/>
<dbReference type="TreeFam" id="TF320043"/>
<dbReference type="BioGRID-ORCS" id="72649">
    <property type="hits" value="10 hits in 78 CRISPR screens"/>
</dbReference>
<dbReference type="ChiTaRS" id="Tmem209">
    <property type="organism name" value="mouse"/>
</dbReference>
<dbReference type="PRO" id="PR:Q8BRG8"/>
<dbReference type="Proteomes" id="UP000000589">
    <property type="component" value="Chromosome 6"/>
</dbReference>
<dbReference type="RNAct" id="Q8BRG8">
    <property type="molecule type" value="protein"/>
</dbReference>
<dbReference type="Bgee" id="ENSMUSG00000029782">
    <property type="expression patterns" value="Expressed in spermatocyte and 251 other cell types or tissues"/>
</dbReference>
<dbReference type="ExpressionAtlas" id="Q8BRG8">
    <property type="expression patterns" value="baseline and differential"/>
</dbReference>
<dbReference type="GO" id="GO:0005794">
    <property type="term" value="C:Golgi apparatus"/>
    <property type="evidence" value="ECO:0007669"/>
    <property type="project" value="UniProtKB-SubCell"/>
</dbReference>
<dbReference type="GO" id="GO:0016020">
    <property type="term" value="C:membrane"/>
    <property type="evidence" value="ECO:0007669"/>
    <property type="project" value="UniProtKB-SubCell"/>
</dbReference>
<dbReference type="GO" id="GO:0005635">
    <property type="term" value="C:nuclear envelope"/>
    <property type="evidence" value="ECO:0007669"/>
    <property type="project" value="UniProtKB-SubCell"/>
</dbReference>
<dbReference type="InterPro" id="IPR019176">
    <property type="entry name" value="Cytochrome_B561-rel"/>
</dbReference>
<dbReference type="PANTHER" id="PTHR21780">
    <property type="entry name" value="TRANSMEMBRANE PROTEIN 209"/>
    <property type="match status" value="1"/>
</dbReference>
<dbReference type="PANTHER" id="PTHR21780:SF0">
    <property type="entry name" value="TRANSMEMBRANE PROTEIN 209"/>
    <property type="match status" value="1"/>
</dbReference>
<dbReference type="Pfam" id="PF09786">
    <property type="entry name" value="CytochromB561_N"/>
    <property type="match status" value="1"/>
</dbReference>
<organism>
    <name type="scientific">Mus musculus</name>
    <name type="common">Mouse</name>
    <dbReference type="NCBI Taxonomy" id="10090"/>
    <lineage>
        <taxon>Eukaryota</taxon>
        <taxon>Metazoa</taxon>
        <taxon>Chordata</taxon>
        <taxon>Craniata</taxon>
        <taxon>Vertebrata</taxon>
        <taxon>Euteleostomi</taxon>
        <taxon>Mammalia</taxon>
        <taxon>Eutheria</taxon>
        <taxon>Euarchontoglires</taxon>
        <taxon>Glires</taxon>
        <taxon>Rodentia</taxon>
        <taxon>Myomorpha</taxon>
        <taxon>Muroidea</taxon>
        <taxon>Muridae</taxon>
        <taxon>Murinae</taxon>
        <taxon>Mus</taxon>
        <taxon>Mus</taxon>
    </lineage>
</organism>
<protein>
    <recommendedName>
        <fullName>Transmembrane protein 209</fullName>
    </recommendedName>
</protein>
<reference key="1">
    <citation type="journal article" date="2005" name="Science">
        <title>The transcriptional landscape of the mammalian genome.</title>
        <authorList>
            <person name="Carninci P."/>
            <person name="Kasukawa T."/>
            <person name="Katayama S."/>
            <person name="Gough J."/>
            <person name="Frith M.C."/>
            <person name="Maeda N."/>
            <person name="Oyama R."/>
            <person name="Ravasi T."/>
            <person name="Lenhard B."/>
            <person name="Wells C."/>
            <person name="Kodzius R."/>
            <person name="Shimokawa K."/>
            <person name="Bajic V.B."/>
            <person name="Brenner S.E."/>
            <person name="Batalov S."/>
            <person name="Forrest A.R."/>
            <person name="Zavolan M."/>
            <person name="Davis M.J."/>
            <person name="Wilming L.G."/>
            <person name="Aidinis V."/>
            <person name="Allen J.E."/>
            <person name="Ambesi-Impiombato A."/>
            <person name="Apweiler R."/>
            <person name="Aturaliya R.N."/>
            <person name="Bailey T.L."/>
            <person name="Bansal M."/>
            <person name="Baxter L."/>
            <person name="Beisel K.W."/>
            <person name="Bersano T."/>
            <person name="Bono H."/>
            <person name="Chalk A.M."/>
            <person name="Chiu K.P."/>
            <person name="Choudhary V."/>
            <person name="Christoffels A."/>
            <person name="Clutterbuck D.R."/>
            <person name="Crowe M.L."/>
            <person name="Dalla E."/>
            <person name="Dalrymple B.P."/>
            <person name="de Bono B."/>
            <person name="Della Gatta G."/>
            <person name="di Bernardo D."/>
            <person name="Down T."/>
            <person name="Engstrom P."/>
            <person name="Fagiolini M."/>
            <person name="Faulkner G."/>
            <person name="Fletcher C.F."/>
            <person name="Fukushima T."/>
            <person name="Furuno M."/>
            <person name="Futaki S."/>
            <person name="Gariboldi M."/>
            <person name="Georgii-Hemming P."/>
            <person name="Gingeras T.R."/>
            <person name="Gojobori T."/>
            <person name="Green R.E."/>
            <person name="Gustincich S."/>
            <person name="Harbers M."/>
            <person name="Hayashi Y."/>
            <person name="Hensch T.K."/>
            <person name="Hirokawa N."/>
            <person name="Hill D."/>
            <person name="Huminiecki L."/>
            <person name="Iacono M."/>
            <person name="Ikeo K."/>
            <person name="Iwama A."/>
            <person name="Ishikawa T."/>
            <person name="Jakt M."/>
            <person name="Kanapin A."/>
            <person name="Katoh M."/>
            <person name="Kawasawa Y."/>
            <person name="Kelso J."/>
            <person name="Kitamura H."/>
            <person name="Kitano H."/>
            <person name="Kollias G."/>
            <person name="Krishnan S.P."/>
            <person name="Kruger A."/>
            <person name="Kummerfeld S.K."/>
            <person name="Kurochkin I.V."/>
            <person name="Lareau L.F."/>
            <person name="Lazarevic D."/>
            <person name="Lipovich L."/>
            <person name="Liu J."/>
            <person name="Liuni S."/>
            <person name="McWilliam S."/>
            <person name="Madan Babu M."/>
            <person name="Madera M."/>
            <person name="Marchionni L."/>
            <person name="Matsuda H."/>
            <person name="Matsuzawa S."/>
            <person name="Miki H."/>
            <person name="Mignone F."/>
            <person name="Miyake S."/>
            <person name="Morris K."/>
            <person name="Mottagui-Tabar S."/>
            <person name="Mulder N."/>
            <person name="Nakano N."/>
            <person name="Nakauchi H."/>
            <person name="Ng P."/>
            <person name="Nilsson R."/>
            <person name="Nishiguchi S."/>
            <person name="Nishikawa S."/>
            <person name="Nori F."/>
            <person name="Ohara O."/>
            <person name="Okazaki Y."/>
            <person name="Orlando V."/>
            <person name="Pang K.C."/>
            <person name="Pavan W.J."/>
            <person name="Pavesi G."/>
            <person name="Pesole G."/>
            <person name="Petrovsky N."/>
            <person name="Piazza S."/>
            <person name="Reed J."/>
            <person name="Reid J.F."/>
            <person name="Ring B.Z."/>
            <person name="Ringwald M."/>
            <person name="Rost B."/>
            <person name="Ruan Y."/>
            <person name="Salzberg S.L."/>
            <person name="Sandelin A."/>
            <person name="Schneider C."/>
            <person name="Schoenbach C."/>
            <person name="Sekiguchi K."/>
            <person name="Semple C.A."/>
            <person name="Seno S."/>
            <person name="Sessa L."/>
            <person name="Sheng Y."/>
            <person name="Shibata Y."/>
            <person name="Shimada H."/>
            <person name="Shimada K."/>
            <person name="Silva D."/>
            <person name="Sinclair B."/>
            <person name="Sperling S."/>
            <person name="Stupka E."/>
            <person name="Sugiura K."/>
            <person name="Sultana R."/>
            <person name="Takenaka Y."/>
            <person name="Taki K."/>
            <person name="Tammoja K."/>
            <person name="Tan S.L."/>
            <person name="Tang S."/>
            <person name="Taylor M.S."/>
            <person name="Tegner J."/>
            <person name="Teichmann S.A."/>
            <person name="Ueda H.R."/>
            <person name="van Nimwegen E."/>
            <person name="Verardo R."/>
            <person name="Wei C.L."/>
            <person name="Yagi K."/>
            <person name="Yamanishi H."/>
            <person name="Zabarovsky E."/>
            <person name="Zhu S."/>
            <person name="Zimmer A."/>
            <person name="Hide W."/>
            <person name="Bult C."/>
            <person name="Grimmond S.M."/>
            <person name="Teasdale R.D."/>
            <person name="Liu E.T."/>
            <person name="Brusic V."/>
            <person name="Quackenbush J."/>
            <person name="Wahlestedt C."/>
            <person name="Mattick J.S."/>
            <person name="Hume D.A."/>
            <person name="Kai C."/>
            <person name="Sasaki D."/>
            <person name="Tomaru Y."/>
            <person name="Fukuda S."/>
            <person name="Kanamori-Katayama M."/>
            <person name="Suzuki M."/>
            <person name="Aoki J."/>
            <person name="Arakawa T."/>
            <person name="Iida J."/>
            <person name="Imamura K."/>
            <person name="Itoh M."/>
            <person name="Kato T."/>
            <person name="Kawaji H."/>
            <person name="Kawagashira N."/>
            <person name="Kawashima T."/>
            <person name="Kojima M."/>
            <person name="Kondo S."/>
            <person name="Konno H."/>
            <person name="Nakano K."/>
            <person name="Ninomiya N."/>
            <person name="Nishio T."/>
            <person name="Okada M."/>
            <person name="Plessy C."/>
            <person name="Shibata K."/>
            <person name="Shiraki T."/>
            <person name="Suzuki S."/>
            <person name="Tagami M."/>
            <person name="Waki K."/>
            <person name="Watahiki A."/>
            <person name="Okamura-Oho Y."/>
            <person name="Suzuki H."/>
            <person name="Kawai J."/>
            <person name="Hayashizaki Y."/>
        </authorList>
    </citation>
    <scope>NUCLEOTIDE SEQUENCE [LARGE SCALE MRNA] (ISOFORMS 1 AND 3)</scope>
    <source>
        <strain>C57BL/6J</strain>
        <tissue>Embryo</tissue>
        <tissue>Head</tissue>
        <tissue>Muellerian duct</tissue>
        <tissue>Submandibular gland</tissue>
    </source>
</reference>
<reference key="2">
    <citation type="journal article" date="2004" name="Genome Res.">
        <title>The status, quality, and expansion of the NIH full-length cDNA project: the Mammalian Gene Collection (MGC).</title>
        <authorList>
            <consortium name="The MGC Project Team"/>
        </authorList>
    </citation>
    <scope>NUCLEOTIDE SEQUENCE [LARGE SCALE MRNA] (ISOFORM 2)</scope>
    <source>
        <strain>C57BL/6J</strain>
        <tissue>Brain</tissue>
        <tissue>Embryo</tissue>
    </source>
</reference>
<proteinExistence type="evidence at transcript level"/>
<comment type="function">
    <text evidence="1">Nuclear envelope protein which in association with NUP205, may be involved in nuclear transport of various nuclear proteins in addition to MYC.</text>
</comment>
<comment type="subunit">
    <text evidence="1">Interacts with NUP205.</text>
</comment>
<comment type="subcellular location">
    <subcellularLocation>
        <location evidence="6">Membrane</location>
        <topology evidence="2">Multi-pass membrane protein</topology>
    </subcellularLocation>
    <subcellularLocation>
        <location evidence="1">Nucleus envelope</location>
    </subcellularLocation>
    <subcellularLocation>
        <location evidence="1">Golgi apparatus</location>
    </subcellularLocation>
    <subcellularLocation>
        <location evidence="1">Cytoplasm</location>
    </subcellularLocation>
    <text evidence="1">Weakly expressed in the cytoplasm.</text>
</comment>
<comment type="alternative products">
    <event type="alternative splicing"/>
    <isoform>
        <id>Q8BRG8-1</id>
        <name>1</name>
        <sequence type="displayed"/>
    </isoform>
    <isoform>
        <id>Q8BRG8-2</id>
        <name>2</name>
        <sequence type="described" ref="VSP_033284"/>
    </isoform>
    <isoform>
        <id>Q8BRG8-3</id>
        <name>3</name>
        <sequence type="described" ref="VSP_033285 VSP_033286"/>
    </isoform>
</comment>
<comment type="sequence caution" evidence="6">
    <conflict type="frameshift">
        <sequence resource="EMBL-CDS" id="BAC41016"/>
    </conflict>
</comment>
<gene>
    <name type="primary">Tmem209</name>
</gene>
<name>TM209_MOUSE</name>
<accession>Q8BRG8</accession>
<accession>Q80WQ3</accession>
<accession>Q8BP02</accession>
<accession>Q8C202</accession>
<accession>Q8CDY5</accession>
<evidence type="ECO:0000250" key="1">
    <source>
        <dbReference type="UniProtKB" id="Q96SK2"/>
    </source>
</evidence>
<evidence type="ECO:0000255" key="2"/>
<evidence type="ECO:0000256" key="3">
    <source>
        <dbReference type="SAM" id="MobiDB-lite"/>
    </source>
</evidence>
<evidence type="ECO:0000303" key="4">
    <source>
    </source>
</evidence>
<evidence type="ECO:0000303" key="5">
    <source>
    </source>
</evidence>
<evidence type="ECO:0000305" key="6"/>
<sequence>MMQGDVSPNPSLIDRTIKMRKETETRKVVLAWGLLNVSMAGMIYTEMTGKLISTYYNVTYWPLWYIELALASLFSLNALFDFWRYFKYTVAPTSLVVSPGQQALLGLKQAVVQTTPPRDLAATQISPSPPSPSIQGQSVLSYSPSRSPSTSPKFATSCMTGYSPQLQGLSSGGLGSYSPGVTYSPVSGYNKLASFSLSPSSPYPTTVGPVESSGLRARYRSPPTVYNSPTDKEDYMTDLRTLDTFLRSEEEKQHRVKLGSPDSTSPSTSPTFWNYSRSVGDYAQTLKKFQYQLACRSQAPCANKDEADLISKQAAEEVWARVTMNRQLLDHMDSWTAKFRNWISETILVPLVQEIESVSTQMRRMGCPELQIGEASVTSLKQAALVRAPLIPTLNAIVQYLDLTPNQEYLFERIKELSQGGCMSSFRWNRGGDFKGRKWDTDLPTDSAIIMHVFCTYLDSRLPPHPKYPDGKTFTSQHFVQTPNKPDVTNENVFCIYQSAVNPPHYELIYQRHVYNLPKGRNNMFHTLLMFLYIIKTKESGMLGRVNLGLSGVNILWIFGE</sequence>